<evidence type="ECO:0000255" key="1">
    <source>
        <dbReference type="HAMAP-Rule" id="MF_00218"/>
    </source>
</evidence>
<sequence length="354" mass="39233">MTELKNDRYLRALLRQPVDVTPVWMMRQAGRYLPEYKATRAQAGDFMSLCKNAELACEVTLQPLRRYPLDAAILFSDILTVPDAMGLGLYFEAGEGPRFTSPVTCKADVDKLPIPDPEDELGYVMNAVRTIRRELKGEVPLIGFSGSPWTLATYMVEGGSSKAFTVIKKMMYADPQALHALLDKLAKSVTLYLNAQIKAGAQAVMIFDTWGGVLTGRDYQQFSLYYMHKIVNGLLRENDGRRVPVTLFTKGGGQWLEAMAETGCDALGLDWTTDIADARRRVGNKVALQGNMDPSMLYAPPARIEEEVASILAGFGHGEGHVFNLGHGIHQDVPPEHAGVFVEAVHRLSEQYHR</sequence>
<dbReference type="EC" id="4.1.1.37" evidence="1"/>
<dbReference type="EMBL" id="CU928162">
    <property type="protein sequence ID" value="CAR10668.1"/>
    <property type="molecule type" value="Genomic_DNA"/>
</dbReference>
<dbReference type="RefSeq" id="WP_000137663.1">
    <property type="nucleotide sequence ID" value="NC_011745.1"/>
</dbReference>
<dbReference type="SMR" id="B7N2J9"/>
<dbReference type="KEGG" id="ecq:ECED1_4704"/>
<dbReference type="HOGENOM" id="CLU_040933_0_0_6"/>
<dbReference type="UniPathway" id="UPA00251">
    <property type="reaction ID" value="UER00321"/>
</dbReference>
<dbReference type="Proteomes" id="UP000000748">
    <property type="component" value="Chromosome"/>
</dbReference>
<dbReference type="GO" id="GO:0005829">
    <property type="term" value="C:cytosol"/>
    <property type="evidence" value="ECO:0007669"/>
    <property type="project" value="TreeGrafter"/>
</dbReference>
<dbReference type="GO" id="GO:0004853">
    <property type="term" value="F:uroporphyrinogen decarboxylase activity"/>
    <property type="evidence" value="ECO:0007669"/>
    <property type="project" value="UniProtKB-UniRule"/>
</dbReference>
<dbReference type="GO" id="GO:0019353">
    <property type="term" value="P:protoporphyrinogen IX biosynthetic process from glutamate"/>
    <property type="evidence" value="ECO:0007669"/>
    <property type="project" value="TreeGrafter"/>
</dbReference>
<dbReference type="CDD" id="cd00717">
    <property type="entry name" value="URO-D"/>
    <property type="match status" value="1"/>
</dbReference>
<dbReference type="FunFam" id="3.20.20.210:FF:000001">
    <property type="entry name" value="Uroporphyrinogen decarboxylase"/>
    <property type="match status" value="1"/>
</dbReference>
<dbReference type="Gene3D" id="3.20.20.210">
    <property type="match status" value="1"/>
</dbReference>
<dbReference type="HAMAP" id="MF_00218">
    <property type="entry name" value="URO_D"/>
    <property type="match status" value="1"/>
</dbReference>
<dbReference type="InterPro" id="IPR038071">
    <property type="entry name" value="UROD/MetE-like_sf"/>
</dbReference>
<dbReference type="InterPro" id="IPR006361">
    <property type="entry name" value="Uroporphyrinogen_deCO2ase_HemE"/>
</dbReference>
<dbReference type="InterPro" id="IPR000257">
    <property type="entry name" value="Uroporphyrinogen_deCOase"/>
</dbReference>
<dbReference type="NCBIfam" id="TIGR01464">
    <property type="entry name" value="hemE"/>
    <property type="match status" value="1"/>
</dbReference>
<dbReference type="PANTHER" id="PTHR21091">
    <property type="entry name" value="METHYLTETRAHYDROFOLATE:HOMOCYSTEINE METHYLTRANSFERASE RELATED"/>
    <property type="match status" value="1"/>
</dbReference>
<dbReference type="PANTHER" id="PTHR21091:SF169">
    <property type="entry name" value="UROPORPHYRINOGEN DECARBOXYLASE"/>
    <property type="match status" value="1"/>
</dbReference>
<dbReference type="Pfam" id="PF01208">
    <property type="entry name" value="URO-D"/>
    <property type="match status" value="1"/>
</dbReference>
<dbReference type="SUPFAM" id="SSF51726">
    <property type="entry name" value="UROD/MetE-like"/>
    <property type="match status" value="1"/>
</dbReference>
<dbReference type="PROSITE" id="PS00906">
    <property type="entry name" value="UROD_1"/>
    <property type="match status" value="1"/>
</dbReference>
<dbReference type="PROSITE" id="PS00907">
    <property type="entry name" value="UROD_2"/>
    <property type="match status" value="1"/>
</dbReference>
<comment type="function">
    <text evidence="1">Catalyzes the decarboxylation of four acetate groups of uroporphyrinogen-III to yield coproporphyrinogen-III.</text>
</comment>
<comment type="catalytic activity">
    <reaction evidence="1">
        <text>uroporphyrinogen III + 4 H(+) = coproporphyrinogen III + 4 CO2</text>
        <dbReference type="Rhea" id="RHEA:19865"/>
        <dbReference type="ChEBI" id="CHEBI:15378"/>
        <dbReference type="ChEBI" id="CHEBI:16526"/>
        <dbReference type="ChEBI" id="CHEBI:57308"/>
        <dbReference type="ChEBI" id="CHEBI:57309"/>
        <dbReference type="EC" id="4.1.1.37"/>
    </reaction>
</comment>
<comment type="pathway">
    <text evidence="1">Porphyrin-containing compound metabolism; protoporphyrin-IX biosynthesis; coproporphyrinogen-III from 5-aminolevulinate: step 4/4.</text>
</comment>
<comment type="subunit">
    <text evidence="1">Homodimer.</text>
</comment>
<comment type="subcellular location">
    <subcellularLocation>
        <location evidence="1">Cytoplasm</location>
    </subcellularLocation>
</comment>
<comment type="similarity">
    <text evidence="1">Belongs to the uroporphyrinogen decarboxylase family.</text>
</comment>
<name>DCUP_ECO81</name>
<keyword id="KW-0963">Cytoplasm</keyword>
<keyword id="KW-0210">Decarboxylase</keyword>
<keyword id="KW-0456">Lyase</keyword>
<keyword id="KW-0627">Porphyrin biosynthesis</keyword>
<reference key="1">
    <citation type="journal article" date="2009" name="PLoS Genet.">
        <title>Organised genome dynamics in the Escherichia coli species results in highly diverse adaptive paths.</title>
        <authorList>
            <person name="Touchon M."/>
            <person name="Hoede C."/>
            <person name="Tenaillon O."/>
            <person name="Barbe V."/>
            <person name="Baeriswyl S."/>
            <person name="Bidet P."/>
            <person name="Bingen E."/>
            <person name="Bonacorsi S."/>
            <person name="Bouchier C."/>
            <person name="Bouvet O."/>
            <person name="Calteau A."/>
            <person name="Chiapello H."/>
            <person name="Clermont O."/>
            <person name="Cruveiller S."/>
            <person name="Danchin A."/>
            <person name="Diard M."/>
            <person name="Dossat C."/>
            <person name="Karoui M.E."/>
            <person name="Frapy E."/>
            <person name="Garry L."/>
            <person name="Ghigo J.M."/>
            <person name="Gilles A.M."/>
            <person name="Johnson J."/>
            <person name="Le Bouguenec C."/>
            <person name="Lescat M."/>
            <person name="Mangenot S."/>
            <person name="Martinez-Jehanne V."/>
            <person name="Matic I."/>
            <person name="Nassif X."/>
            <person name="Oztas S."/>
            <person name="Petit M.A."/>
            <person name="Pichon C."/>
            <person name="Rouy Z."/>
            <person name="Ruf C.S."/>
            <person name="Schneider D."/>
            <person name="Tourret J."/>
            <person name="Vacherie B."/>
            <person name="Vallenet D."/>
            <person name="Medigue C."/>
            <person name="Rocha E.P.C."/>
            <person name="Denamur E."/>
        </authorList>
    </citation>
    <scope>NUCLEOTIDE SEQUENCE [LARGE SCALE GENOMIC DNA]</scope>
    <source>
        <strain>ED1a</strain>
    </source>
</reference>
<proteinExistence type="inferred from homology"/>
<gene>
    <name evidence="1" type="primary">hemE</name>
    <name type="ordered locus">ECED1_4704</name>
</gene>
<feature type="chain" id="PRO_1000197524" description="Uroporphyrinogen decarboxylase">
    <location>
        <begin position="1"/>
        <end position="354"/>
    </location>
</feature>
<feature type="binding site" evidence="1">
    <location>
        <begin position="27"/>
        <end position="31"/>
    </location>
    <ligand>
        <name>substrate</name>
    </ligand>
</feature>
<feature type="binding site" evidence="1">
    <location>
        <position position="77"/>
    </location>
    <ligand>
        <name>substrate</name>
    </ligand>
</feature>
<feature type="binding site" evidence="1">
    <location>
        <position position="154"/>
    </location>
    <ligand>
        <name>substrate</name>
    </ligand>
</feature>
<feature type="binding site" evidence="1">
    <location>
        <position position="209"/>
    </location>
    <ligand>
        <name>substrate</name>
    </ligand>
</feature>
<feature type="binding site" evidence="1">
    <location>
        <position position="327"/>
    </location>
    <ligand>
        <name>substrate</name>
    </ligand>
</feature>
<feature type="site" description="Transition state stabilizer" evidence="1">
    <location>
        <position position="77"/>
    </location>
</feature>
<protein>
    <recommendedName>
        <fullName evidence="1">Uroporphyrinogen decarboxylase</fullName>
        <shortName evidence="1">UPD</shortName>
        <shortName evidence="1">URO-D</shortName>
        <ecNumber evidence="1">4.1.1.37</ecNumber>
    </recommendedName>
</protein>
<organism>
    <name type="scientific">Escherichia coli O81 (strain ED1a)</name>
    <dbReference type="NCBI Taxonomy" id="585397"/>
    <lineage>
        <taxon>Bacteria</taxon>
        <taxon>Pseudomonadati</taxon>
        <taxon>Pseudomonadota</taxon>
        <taxon>Gammaproteobacteria</taxon>
        <taxon>Enterobacterales</taxon>
        <taxon>Enterobacteriaceae</taxon>
        <taxon>Escherichia</taxon>
    </lineage>
</organism>
<accession>B7N2J9</accession>